<proteinExistence type="evidence at protein level"/>
<reference key="1">
    <citation type="journal article" date="2006" name="Arch. Biochem. Biophys.">
        <title>The diverse sesquiterpene profile of patchouli, Pogostemon cablin, is correlated with a limited number of sesquiterpene synthases.</title>
        <authorList>
            <person name="Deguerry F."/>
            <person name="Pastore L."/>
            <person name="Wu S."/>
            <person name="Clark A."/>
            <person name="Chappell J."/>
            <person name="Schalk M."/>
        </authorList>
    </citation>
    <scope>NUCLEOTIDE SEQUENCE [MRNA]</scope>
    <scope>FUNCTION</scope>
    <scope>CATALYTIC ACTIVITY</scope>
</reference>
<keyword id="KW-0963">Cytoplasm</keyword>
<keyword id="KW-0456">Lyase</keyword>
<keyword id="KW-0460">Magnesium</keyword>
<keyword id="KW-0479">Metal-binding</keyword>
<comment type="function">
    <text evidence="2">Sesquiterpene synthase involved in germacrene A biosynthesis. Also produces additional sesquiterpene products, including 4,5-di-epi-aristolochene, eremophilene, alpha-selinene.</text>
</comment>
<comment type="catalytic activity">
    <reaction evidence="2">
        <text>(2E,6E)-farnesyl diphosphate = (+)-(R)-germacrene A + diphosphate</text>
        <dbReference type="Rhea" id="RHEA:12516"/>
        <dbReference type="ChEBI" id="CHEBI:33019"/>
        <dbReference type="ChEBI" id="CHEBI:41595"/>
        <dbReference type="ChEBI" id="CHEBI:175763"/>
        <dbReference type="EC" id="4.2.3.23"/>
    </reaction>
</comment>
<comment type="cofactor">
    <cofactor evidence="1">
        <name>Mg(2+)</name>
        <dbReference type="ChEBI" id="CHEBI:18420"/>
    </cofactor>
    <text evidence="1">Binds 3 Mg(2+) ions per subunit.</text>
</comment>
<comment type="pathway">
    <text>Secondary metabolite biosynthesis; terpenoid biosynthesis.</text>
</comment>
<comment type="subcellular location">
    <subcellularLocation>
        <location evidence="1">Cytoplasm</location>
        <location evidence="1">Cytosol</location>
    </subcellularLocation>
</comment>
<comment type="domain">
    <text evidence="1">The Asp-Asp-Xaa-Xaa-Asp/Glu (DDXXD/E) motif is important for the catalytic activity, presumably through binding to Mg(2+).</text>
</comment>
<comment type="similarity">
    <text evidence="3">Belongs to the terpene synthase family.</text>
</comment>
<name>TPGAS_POGCB</name>
<sequence length="554" mass="64232">MAVQISETVRPFANFSPNPSLWGDQFINHKSKTQQISRIYLEEIEGLKNEVKCMLTSTPEGKMADTVNLIDTLERLGVSYHFEKEIEEKMKHLFNLIKADNYKDHEGCDLYTDALHFRLFRQHGYPISSGIFNKWMDGNGKFKESIKSDAKGLLSLYEACCLRTHGDTLLDEALVFATASLKSMAANLASPLRKQVEHALFQHLHFGIPRVEARHFITFYEEEEHKNEMLLRFAKLDFNALQALHKEELSEISKWWKDLDLISKLPYARDRVVESYFWAVGVYYQPKYSRARIMLTKTIAMTAILDDTYDSYGTLEELDVLTKAIERWDIKEINGLPEYIKGFYKQVLKLYQQLEEELAKEGRSYAVYYAIEACKELARSYAVEAKWFKKGYLPGFEEYLINSLVTSTAGYLNIISFFGVESVTKEDFEWFSKKPRIAVATQIITRVIDDIATYEVEKEKGQSATGIDCYMKEHGVSKEKAMQRFYEMSTNAWKDINEEGLSWPSSFSRDIFVQLRNFSRMVDVTYGKNEDGYSKPEKILKPLIIALFVDQIKL</sequence>
<feature type="chain" id="PRO_0000419750" description="Germacrene A synthase">
    <location>
        <begin position="1"/>
        <end position="554"/>
    </location>
</feature>
<feature type="short sequence motif" description="DDXXD motif">
    <location>
        <begin position="306"/>
        <end position="310"/>
    </location>
</feature>
<feature type="binding site" evidence="1">
    <location>
        <position position="306"/>
    </location>
    <ligand>
        <name>Mg(2+)</name>
        <dbReference type="ChEBI" id="CHEBI:18420"/>
        <label>1</label>
    </ligand>
</feature>
<feature type="binding site" evidence="1">
    <location>
        <position position="306"/>
    </location>
    <ligand>
        <name>Mg(2+)</name>
        <dbReference type="ChEBI" id="CHEBI:18420"/>
        <label>2</label>
    </ligand>
</feature>
<feature type="binding site" evidence="1">
    <location>
        <position position="310"/>
    </location>
    <ligand>
        <name>Mg(2+)</name>
        <dbReference type="ChEBI" id="CHEBI:18420"/>
        <label>1</label>
    </ligand>
</feature>
<feature type="binding site" evidence="1">
    <location>
        <position position="310"/>
    </location>
    <ligand>
        <name>Mg(2+)</name>
        <dbReference type="ChEBI" id="CHEBI:18420"/>
        <label>2</label>
    </ligand>
</feature>
<feature type="binding site" evidence="1">
    <location>
        <position position="453"/>
    </location>
    <ligand>
        <name>Mg(2+)</name>
        <dbReference type="ChEBI" id="CHEBI:18420"/>
        <label>3</label>
    </ligand>
</feature>
<feature type="binding site" evidence="1">
    <location>
        <position position="457"/>
    </location>
    <ligand>
        <name>Mg(2+)</name>
        <dbReference type="ChEBI" id="CHEBI:18420"/>
        <label>3</label>
    </ligand>
</feature>
<dbReference type="EC" id="4.2.3.23"/>
<dbReference type="EMBL" id="AY508728">
    <property type="protein sequence ID" value="AAS86321.1"/>
    <property type="molecule type" value="mRNA"/>
</dbReference>
<dbReference type="SMR" id="Q49SP5"/>
<dbReference type="BioCyc" id="MetaCyc:MONOMER-14837"/>
<dbReference type="UniPathway" id="UPA00213"/>
<dbReference type="GO" id="GO:0005829">
    <property type="term" value="C:cytosol"/>
    <property type="evidence" value="ECO:0007669"/>
    <property type="project" value="UniProtKB-SubCell"/>
</dbReference>
<dbReference type="GO" id="GO:0034005">
    <property type="term" value="F:germacrene-A synthase activity"/>
    <property type="evidence" value="ECO:0007669"/>
    <property type="project" value="UniProtKB-EC"/>
</dbReference>
<dbReference type="GO" id="GO:0000287">
    <property type="term" value="F:magnesium ion binding"/>
    <property type="evidence" value="ECO:0007669"/>
    <property type="project" value="InterPro"/>
</dbReference>
<dbReference type="GO" id="GO:0010334">
    <property type="term" value="F:sesquiterpene synthase activity"/>
    <property type="evidence" value="ECO:0000314"/>
    <property type="project" value="UniProtKB"/>
</dbReference>
<dbReference type="GO" id="GO:0016102">
    <property type="term" value="P:diterpenoid biosynthetic process"/>
    <property type="evidence" value="ECO:0007669"/>
    <property type="project" value="InterPro"/>
</dbReference>
<dbReference type="GO" id="GO:0045338">
    <property type="term" value="P:farnesyl diphosphate metabolic process"/>
    <property type="evidence" value="ECO:0000314"/>
    <property type="project" value="UniProtKB"/>
</dbReference>
<dbReference type="GO" id="GO:0051762">
    <property type="term" value="P:sesquiterpene biosynthetic process"/>
    <property type="evidence" value="ECO:0000314"/>
    <property type="project" value="UniProtKB"/>
</dbReference>
<dbReference type="CDD" id="cd00684">
    <property type="entry name" value="Terpene_cyclase_plant_C1"/>
    <property type="match status" value="1"/>
</dbReference>
<dbReference type="FunFam" id="1.10.600.10:FF:000007">
    <property type="entry name" value="Isoprene synthase, chloroplastic"/>
    <property type="match status" value="1"/>
</dbReference>
<dbReference type="FunFam" id="1.50.10.130:FF:000001">
    <property type="entry name" value="Isoprene synthase, chloroplastic"/>
    <property type="match status" value="1"/>
</dbReference>
<dbReference type="Gene3D" id="1.10.600.10">
    <property type="entry name" value="Farnesyl Diphosphate Synthase"/>
    <property type="match status" value="1"/>
</dbReference>
<dbReference type="Gene3D" id="1.50.10.130">
    <property type="entry name" value="Terpene synthase, N-terminal domain"/>
    <property type="match status" value="1"/>
</dbReference>
<dbReference type="InterPro" id="IPR008949">
    <property type="entry name" value="Isoprenoid_synthase_dom_sf"/>
</dbReference>
<dbReference type="InterPro" id="IPR034741">
    <property type="entry name" value="Terpene_cyclase-like_1_C"/>
</dbReference>
<dbReference type="InterPro" id="IPR044814">
    <property type="entry name" value="Terpene_cyclase_plant_C1"/>
</dbReference>
<dbReference type="InterPro" id="IPR001906">
    <property type="entry name" value="Terpene_synth_N"/>
</dbReference>
<dbReference type="InterPro" id="IPR036965">
    <property type="entry name" value="Terpene_synth_N_sf"/>
</dbReference>
<dbReference type="InterPro" id="IPR050148">
    <property type="entry name" value="Terpene_synthase-like"/>
</dbReference>
<dbReference type="InterPro" id="IPR005630">
    <property type="entry name" value="Terpene_synthase_metal-bd"/>
</dbReference>
<dbReference type="InterPro" id="IPR008930">
    <property type="entry name" value="Terpenoid_cyclase/PrenylTrfase"/>
</dbReference>
<dbReference type="PANTHER" id="PTHR31225:SF93">
    <property type="entry name" value="ALPHA-HUMULENE_(-)-(E)-BETA-CARYOPHYLLENE SYNTHASE"/>
    <property type="match status" value="1"/>
</dbReference>
<dbReference type="PANTHER" id="PTHR31225">
    <property type="entry name" value="OS04G0344100 PROTEIN-RELATED"/>
    <property type="match status" value="1"/>
</dbReference>
<dbReference type="Pfam" id="PF01397">
    <property type="entry name" value="Terpene_synth"/>
    <property type="match status" value="1"/>
</dbReference>
<dbReference type="Pfam" id="PF03936">
    <property type="entry name" value="Terpene_synth_C"/>
    <property type="match status" value="1"/>
</dbReference>
<dbReference type="SFLD" id="SFLDS00005">
    <property type="entry name" value="Isoprenoid_Synthase_Type_I"/>
    <property type="match status" value="1"/>
</dbReference>
<dbReference type="SFLD" id="SFLDG01019">
    <property type="entry name" value="Terpene_Cyclase_Like_1_C_Termi"/>
    <property type="match status" value="1"/>
</dbReference>
<dbReference type="SUPFAM" id="SSF48239">
    <property type="entry name" value="Terpenoid cyclases/Protein prenyltransferases"/>
    <property type="match status" value="1"/>
</dbReference>
<dbReference type="SUPFAM" id="SSF48576">
    <property type="entry name" value="Terpenoid synthases"/>
    <property type="match status" value="1"/>
</dbReference>
<evidence type="ECO:0000250" key="1"/>
<evidence type="ECO:0000269" key="2">
    <source>
    </source>
</evidence>
<evidence type="ECO:0000305" key="3"/>
<protein>
    <recommendedName>
        <fullName>Germacrene A synthase</fullName>
        <ecNumber>4.2.3.23</ecNumber>
    </recommendedName>
    <alternativeName>
        <fullName>PatTpsCF2</fullName>
    </alternativeName>
</protein>
<organism>
    <name type="scientific">Pogostemon cablin</name>
    <name type="common">Patchouli</name>
    <name type="synonym">Mentha cablin</name>
    <dbReference type="NCBI Taxonomy" id="28511"/>
    <lineage>
        <taxon>Eukaryota</taxon>
        <taxon>Viridiplantae</taxon>
        <taxon>Streptophyta</taxon>
        <taxon>Embryophyta</taxon>
        <taxon>Tracheophyta</taxon>
        <taxon>Spermatophyta</taxon>
        <taxon>Magnoliopsida</taxon>
        <taxon>eudicotyledons</taxon>
        <taxon>Gunneridae</taxon>
        <taxon>Pentapetalae</taxon>
        <taxon>asterids</taxon>
        <taxon>lamiids</taxon>
        <taxon>Lamiales</taxon>
        <taxon>Lamiaceae</taxon>
        <taxon>Lamioideae</taxon>
        <taxon>Pogostemoneae</taxon>
        <taxon>Pogostemon</taxon>
    </lineage>
</organism>
<accession>Q49SP5</accession>